<gene>
    <name type="primary">ppm2</name>
    <name type="synonym">tyw4</name>
    <name type="ORF">AN0128</name>
</gene>
<protein>
    <recommendedName>
        <fullName>tRNA wybutosine-synthesizing protein 4</fullName>
        <shortName>tRNA-yW synthesizing protein 4</shortName>
        <ecNumber>2.1.1.290</ecNumber>
        <ecNumber>2.3.1.231</ecNumber>
    </recommendedName>
    <alternativeName>
        <fullName>Leucine carboxyl methyltransferase 2</fullName>
    </alternativeName>
    <alternativeName>
        <fullName>tRNA(Phe) (7-(3-amino-3-(methoxycarbonyl)propyl)wyosine(37)-N)-methoxycarbonyltransferase</fullName>
    </alternativeName>
    <alternativeName>
        <fullName>tRNA(Phe) (7-(3-amino-3-carboxypropyl)wyosine(37)-O)-methyltransferase</fullName>
    </alternativeName>
</protein>
<evidence type="ECO:0000250" key="1"/>
<evidence type="ECO:0000255" key="2">
    <source>
        <dbReference type="PROSITE-ProRule" id="PRU00538"/>
    </source>
</evidence>
<evidence type="ECO:0000256" key="3">
    <source>
        <dbReference type="SAM" id="MobiDB-lite"/>
    </source>
</evidence>
<evidence type="ECO:0000305" key="4"/>
<name>TYW4_EMENI</name>
<comment type="function">
    <text evidence="1">Probable S-adenosyl-L-methionine-dependent methyltransferase that acts as a component of the wybutosine biosynthesis pathway. Wybutosine is a hyper modified guanosine with a tricyclic base found at the 3'-position adjacent to the anticodon of eukaryotic phenylalanine tRNA. May methylate the carboxyl group of leucine residues to form alpha-leucine ester residues (By similarity).</text>
</comment>
<comment type="catalytic activity">
    <reaction>
        <text>7-[(3S)-3-amino-3-carboxypropyl]wyosine(37) in tRNA(Phe) + S-adenosyl-L-methionine = 7-[(3S)-(3-amino-3-methoxycarbonyl)propyl]wyosine(37) in tRNA(Phe) + S-adenosyl-L-homocysteine</text>
        <dbReference type="Rhea" id="RHEA:36903"/>
        <dbReference type="Rhea" id="RHEA-COMP:10379"/>
        <dbReference type="Rhea" id="RHEA-COMP:11844"/>
        <dbReference type="ChEBI" id="CHEBI:57856"/>
        <dbReference type="ChEBI" id="CHEBI:59789"/>
        <dbReference type="ChEBI" id="CHEBI:73543"/>
        <dbReference type="ChEBI" id="CHEBI:74275"/>
        <dbReference type="EC" id="2.1.1.290"/>
    </reaction>
</comment>
<comment type="catalytic activity">
    <reaction>
        <text>7-[(3S)-(3-amino-3-methoxycarbonyl)propyl]wyosine(37) in tRNA(Phe) + S-adenosyl-L-methionine + CO2 = wybutosine(37) in tRNA(Phe) + S-adenosyl-L-homocysteine + 2 H(+)</text>
        <dbReference type="Rhea" id="RHEA:37119"/>
        <dbReference type="Rhea" id="RHEA-COMP:11844"/>
        <dbReference type="Rhea" id="RHEA-COMP:11847"/>
        <dbReference type="ChEBI" id="CHEBI:15378"/>
        <dbReference type="ChEBI" id="CHEBI:16526"/>
        <dbReference type="ChEBI" id="CHEBI:57856"/>
        <dbReference type="ChEBI" id="CHEBI:59789"/>
        <dbReference type="ChEBI" id="CHEBI:73544"/>
        <dbReference type="ChEBI" id="CHEBI:74275"/>
        <dbReference type="EC" id="2.3.1.231"/>
    </reaction>
</comment>
<comment type="pathway">
    <text>tRNA modification; wybutosine-tRNA(Phe) biosynthesis.</text>
</comment>
<comment type="similarity">
    <text evidence="4">Belongs to the methyltransferase superfamily. LCMT family.</text>
</comment>
<reference key="1">
    <citation type="journal article" date="2005" name="Nature">
        <title>Sequencing of Aspergillus nidulans and comparative analysis with A. fumigatus and A. oryzae.</title>
        <authorList>
            <person name="Galagan J.E."/>
            <person name="Calvo S.E."/>
            <person name="Cuomo C."/>
            <person name="Ma L.-J."/>
            <person name="Wortman J.R."/>
            <person name="Batzoglou S."/>
            <person name="Lee S.-I."/>
            <person name="Bastuerkmen M."/>
            <person name="Spevak C.C."/>
            <person name="Clutterbuck J."/>
            <person name="Kapitonov V."/>
            <person name="Jurka J."/>
            <person name="Scazzocchio C."/>
            <person name="Farman M.L."/>
            <person name="Butler J."/>
            <person name="Purcell S."/>
            <person name="Harris S."/>
            <person name="Braus G.H."/>
            <person name="Draht O."/>
            <person name="Busch S."/>
            <person name="D'Enfert C."/>
            <person name="Bouchier C."/>
            <person name="Goldman G.H."/>
            <person name="Bell-Pedersen D."/>
            <person name="Griffiths-Jones S."/>
            <person name="Doonan J.H."/>
            <person name="Yu J."/>
            <person name="Vienken K."/>
            <person name="Pain A."/>
            <person name="Freitag M."/>
            <person name="Selker E.U."/>
            <person name="Archer D.B."/>
            <person name="Penalva M.A."/>
            <person name="Oakley B.R."/>
            <person name="Momany M."/>
            <person name="Tanaka T."/>
            <person name="Kumagai T."/>
            <person name="Asai K."/>
            <person name="Machida M."/>
            <person name="Nierman W.C."/>
            <person name="Denning D.W."/>
            <person name="Caddick M.X."/>
            <person name="Hynes M."/>
            <person name="Paoletti M."/>
            <person name="Fischer R."/>
            <person name="Miller B.L."/>
            <person name="Dyer P.S."/>
            <person name="Sachs M.S."/>
            <person name="Osmani S.A."/>
            <person name="Birren B.W."/>
        </authorList>
    </citation>
    <scope>NUCLEOTIDE SEQUENCE [LARGE SCALE GENOMIC DNA]</scope>
    <source>
        <strain>FGSC A4 / ATCC 38163 / CBS 112.46 / NRRL 194 / M139</strain>
    </source>
</reference>
<reference key="2">
    <citation type="journal article" date="2009" name="Fungal Genet. Biol.">
        <title>The 2008 update of the Aspergillus nidulans genome annotation: a community effort.</title>
        <authorList>
            <person name="Wortman J.R."/>
            <person name="Gilsenan J.M."/>
            <person name="Joardar V."/>
            <person name="Deegan J."/>
            <person name="Clutterbuck J."/>
            <person name="Andersen M.R."/>
            <person name="Archer D."/>
            <person name="Bencina M."/>
            <person name="Braus G."/>
            <person name="Coutinho P."/>
            <person name="von Dohren H."/>
            <person name="Doonan J."/>
            <person name="Driessen A.J."/>
            <person name="Durek P."/>
            <person name="Espeso E."/>
            <person name="Fekete E."/>
            <person name="Flipphi M."/>
            <person name="Estrada C.G."/>
            <person name="Geysens S."/>
            <person name="Goldman G."/>
            <person name="de Groot P.W."/>
            <person name="Hansen K."/>
            <person name="Harris S.D."/>
            <person name="Heinekamp T."/>
            <person name="Helmstaedt K."/>
            <person name="Henrissat B."/>
            <person name="Hofmann G."/>
            <person name="Homan T."/>
            <person name="Horio T."/>
            <person name="Horiuchi H."/>
            <person name="James S."/>
            <person name="Jones M."/>
            <person name="Karaffa L."/>
            <person name="Karanyi Z."/>
            <person name="Kato M."/>
            <person name="Keller N."/>
            <person name="Kelly D.E."/>
            <person name="Kiel J.A."/>
            <person name="Kim J.M."/>
            <person name="van der Klei I.J."/>
            <person name="Klis F.M."/>
            <person name="Kovalchuk A."/>
            <person name="Krasevec N."/>
            <person name="Kubicek C.P."/>
            <person name="Liu B."/>
            <person name="Maccabe A."/>
            <person name="Meyer V."/>
            <person name="Mirabito P."/>
            <person name="Miskei M."/>
            <person name="Mos M."/>
            <person name="Mullins J."/>
            <person name="Nelson D.R."/>
            <person name="Nielsen J."/>
            <person name="Oakley B.R."/>
            <person name="Osmani S.A."/>
            <person name="Pakula T."/>
            <person name="Paszewski A."/>
            <person name="Paulsen I."/>
            <person name="Pilsyk S."/>
            <person name="Pocsi I."/>
            <person name="Punt P.J."/>
            <person name="Ram A.F."/>
            <person name="Ren Q."/>
            <person name="Robellet X."/>
            <person name="Robson G."/>
            <person name="Seiboth B."/>
            <person name="van Solingen P."/>
            <person name="Specht T."/>
            <person name="Sun J."/>
            <person name="Taheri-Talesh N."/>
            <person name="Takeshita N."/>
            <person name="Ussery D."/>
            <person name="vanKuyk P.A."/>
            <person name="Visser H."/>
            <person name="van de Vondervoort P.J."/>
            <person name="de Vries R.P."/>
            <person name="Walton J."/>
            <person name="Xiang X."/>
            <person name="Xiong Y."/>
            <person name="Zeng A.P."/>
            <person name="Brandt B.W."/>
            <person name="Cornell M.J."/>
            <person name="van den Hondel C.A."/>
            <person name="Visser J."/>
            <person name="Oliver S.G."/>
            <person name="Turner G."/>
        </authorList>
    </citation>
    <scope>GENOME REANNOTATION</scope>
    <source>
        <strain>FGSC A4 / ATCC 38163 / CBS 112.46 / NRRL 194 / M139</strain>
    </source>
</reference>
<feature type="chain" id="PRO_0000226141" description="tRNA wybutosine-synthesizing protein 4">
    <location>
        <begin position="1"/>
        <end position="1068"/>
    </location>
</feature>
<feature type="domain" description="JmjC" evidence="2">
    <location>
        <begin position="876"/>
        <end position="1024"/>
    </location>
</feature>
<feature type="region of interest" description="Disordered" evidence="3">
    <location>
        <begin position="1"/>
        <end position="31"/>
    </location>
</feature>
<feature type="binding site" evidence="1">
    <location>
        <position position="81"/>
    </location>
    <ligand>
        <name>S-adenosyl-L-methionine</name>
        <dbReference type="ChEBI" id="CHEBI:59789"/>
    </ligand>
</feature>
<feature type="binding site" evidence="1">
    <location>
        <position position="107"/>
    </location>
    <ligand>
        <name>S-adenosyl-L-methionine</name>
        <dbReference type="ChEBI" id="CHEBI:59789"/>
    </ligand>
</feature>
<feature type="binding site" evidence="1">
    <location>
        <position position="134"/>
    </location>
    <ligand>
        <name>S-adenosyl-L-methionine</name>
        <dbReference type="ChEBI" id="CHEBI:59789"/>
    </ligand>
</feature>
<feature type="binding site" evidence="1">
    <location>
        <begin position="181"/>
        <end position="182"/>
    </location>
    <ligand>
        <name>S-adenosyl-L-methionine</name>
        <dbReference type="ChEBI" id="CHEBI:59789"/>
    </ligand>
</feature>
<feature type="binding site" evidence="1">
    <location>
        <position position="208"/>
    </location>
    <ligand>
        <name>S-adenosyl-L-methionine</name>
        <dbReference type="ChEBI" id="CHEBI:59789"/>
    </ligand>
</feature>
<proteinExistence type="inferred from homology"/>
<sequence>MCPPEQPAKAMAPSKSNQAAKSAVPTKEEKSADLVMATNNSSIVSKRSVEMLYYPEPHFFCHFVKKPQRRAPLINRGYWLRMHAMEESVRRFMRESPDKPKFVLNLGCGFDPLPFILLSADRSLCSQTTFVDIDYEKLMLNKKAALREAGALTQILEDVEFGPDESAVQIRSGQYVAVGCDLKNLDKLDRVLRAEVLPAECAVLFLAEVSLTYMDVKSANAVVSWASRLSNDAQFCILEQYFPDGPSHPFAATMMEHFGKLGAPLHSIHEFPSLSDQERRFTEAGWTHAHARSLWDLWSDDEFVPAVLRTSLDSIESFDEWEEFALFASHYFLLHASTRPGTKGSKSAAATADVGPSRQAVTRSNEFRLIPNTSLPTGQRRFGALVPGGEAVIGIHSGWGRQTRVADTDVYKTSKDNIDSHARFPSSNDISARLCHTITAFSDDGDCLLVGGRTSPASALQDTWVRKNNVWQAGSSLPLARFRHCATRVTLGSDRSSGSVLIYGGKTSDGTTLDTWLLWNDNGEGWSSVTVRTMNDAPAPKARFGACLASIDSTNGLLFGGIGPDGTILEDFWTWKLYEEADGSLCMELTDQTGSLRNIALGFDILPRFGATVSSTAQGLVVSGGIIPRRVVPFDGEILLLDSATLLDCIKNGLPLTTPILSTIGLDAGFTGPRPLLVGHVSHAISTDQVLLLGGGAVCFSFGTFWTRGTWMLCPVGERAVNDWALVCENVEKPTKAKAAAQIPAKTKKQKASKKYKPEKYKSTTKVTPIRRVTVESADEFQQILEDAQPVIIESADIGPCTELWTKEYLVNTVGSDRKVIVHAAETETMSFRTKNFKYESKTFGTFMDEVHAGGRQYLRSISEKQPAKLPANLAADFPSLSSDFRLPEALKTVVENAHSSPLRISGPVTLWLHYDVMANVLCQIQGEKRLILYPPSDVPHLDVPAGASSSNINVFQNRADGAIALIPHTSPHEARLKRGDILFIPPLWLHTAAPTGKVSVAVNVFFRNLSQGYALGRDVYGNRDVQAYEKGRKDLEKLVKSFSGLPPDMARFYLLRLADELQETAEQ</sequence>
<keyword id="KW-0489">Methyltransferase</keyword>
<keyword id="KW-1185">Reference proteome</keyword>
<keyword id="KW-0949">S-adenosyl-L-methionine</keyword>
<keyword id="KW-0808">Transferase</keyword>
<keyword id="KW-0819">tRNA processing</keyword>
<organism>
    <name type="scientific">Emericella nidulans (strain FGSC A4 / ATCC 38163 / CBS 112.46 / NRRL 194 / M139)</name>
    <name type="common">Aspergillus nidulans</name>
    <dbReference type="NCBI Taxonomy" id="227321"/>
    <lineage>
        <taxon>Eukaryota</taxon>
        <taxon>Fungi</taxon>
        <taxon>Dikarya</taxon>
        <taxon>Ascomycota</taxon>
        <taxon>Pezizomycotina</taxon>
        <taxon>Eurotiomycetes</taxon>
        <taxon>Eurotiomycetidae</taxon>
        <taxon>Eurotiales</taxon>
        <taxon>Aspergillaceae</taxon>
        <taxon>Aspergillus</taxon>
        <taxon>Aspergillus subgen. Nidulantes</taxon>
    </lineage>
</organism>
<accession>Q5BH52</accession>
<accession>C8VQJ5</accession>
<dbReference type="EC" id="2.1.1.290"/>
<dbReference type="EC" id="2.3.1.231"/>
<dbReference type="EMBL" id="AACD01000004">
    <property type="protein sequence ID" value="EAA65306.1"/>
    <property type="molecule type" value="Genomic_DNA"/>
</dbReference>
<dbReference type="EMBL" id="BN001308">
    <property type="protein sequence ID" value="CBF90143.1"/>
    <property type="molecule type" value="Genomic_DNA"/>
</dbReference>
<dbReference type="RefSeq" id="XP_657732.1">
    <property type="nucleotide sequence ID" value="XM_652640.1"/>
</dbReference>
<dbReference type="SMR" id="Q5BH52"/>
<dbReference type="FunCoup" id="Q5BH52">
    <property type="interactions" value="98"/>
</dbReference>
<dbReference type="STRING" id="227321.Q5BH52"/>
<dbReference type="EnsemblFungi" id="CBF90143">
    <property type="protein sequence ID" value="CBF90143"/>
    <property type="gene ID" value="ANIA_00128"/>
</dbReference>
<dbReference type="KEGG" id="ani:ANIA_00128"/>
<dbReference type="VEuPathDB" id="FungiDB:AN0128"/>
<dbReference type="eggNOG" id="KOG2132">
    <property type="taxonomic scope" value="Eukaryota"/>
</dbReference>
<dbReference type="eggNOG" id="KOG2918">
    <property type="taxonomic scope" value="Eukaryota"/>
</dbReference>
<dbReference type="HOGENOM" id="CLU_002761_1_0_1"/>
<dbReference type="InParanoid" id="Q5BH52"/>
<dbReference type="OMA" id="FCILEQF"/>
<dbReference type="OrthoDB" id="47172at2759"/>
<dbReference type="UniPathway" id="UPA00375"/>
<dbReference type="Proteomes" id="UP000000560">
    <property type="component" value="Chromosome VIII"/>
</dbReference>
<dbReference type="GO" id="GO:0008175">
    <property type="term" value="F:tRNA methyltransferase activity"/>
    <property type="evidence" value="ECO:0000318"/>
    <property type="project" value="GO_Central"/>
</dbReference>
<dbReference type="GO" id="GO:0030488">
    <property type="term" value="P:tRNA methylation"/>
    <property type="evidence" value="ECO:0000318"/>
    <property type="project" value="GO_Central"/>
</dbReference>
<dbReference type="GO" id="GO:0031591">
    <property type="term" value="P:wybutosine biosynthetic process"/>
    <property type="evidence" value="ECO:0000318"/>
    <property type="project" value="GO_Central"/>
</dbReference>
<dbReference type="FunFam" id="2.120.10.80:FF:000133">
    <property type="entry name" value="Leucine carboxyl methyltransferase 2"/>
    <property type="match status" value="1"/>
</dbReference>
<dbReference type="FunFam" id="3.40.50.150:FF:000383">
    <property type="entry name" value="Leucine carboxyl methyltransferase 2"/>
    <property type="match status" value="1"/>
</dbReference>
<dbReference type="FunFam" id="2.60.120.650:FF:000043">
    <property type="entry name" value="tRNA wybutosine-synthesizing protein 4"/>
    <property type="match status" value="1"/>
</dbReference>
<dbReference type="Gene3D" id="6.10.140.1470">
    <property type="match status" value="1"/>
</dbReference>
<dbReference type="Gene3D" id="2.60.120.650">
    <property type="entry name" value="Cupin"/>
    <property type="match status" value="1"/>
</dbReference>
<dbReference type="Gene3D" id="2.120.10.80">
    <property type="entry name" value="Kelch-type beta propeller"/>
    <property type="match status" value="1"/>
</dbReference>
<dbReference type="Gene3D" id="3.40.50.150">
    <property type="entry name" value="Vaccinia Virus protein VP39"/>
    <property type="match status" value="1"/>
</dbReference>
<dbReference type="InterPro" id="IPR041667">
    <property type="entry name" value="Cupin_8"/>
</dbReference>
<dbReference type="InterPro" id="IPR003347">
    <property type="entry name" value="JmjC_dom"/>
</dbReference>
<dbReference type="InterPro" id="IPR015915">
    <property type="entry name" value="Kelch-typ_b-propeller"/>
</dbReference>
<dbReference type="InterPro" id="IPR007213">
    <property type="entry name" value="Ppm1/Ppm2/Tcmp"/>
</dbReference>
<dbReference type="InterPro" id="IPR029063">
    <property type="entry name" value="SAM-dependent_MTases_sf"/>
</dbReference>
<dbReference type="PANTHER" id="PTHR46529">
    <property type="entry name" value="TRNA WYBUTOSINE-SYNTHESIZING PROTEIN 4"/>
    <property type="match status" value="1"/>
</dbReference>
<dbReference type="PANTHER" id="PTHR46529:SF1">
    <property type="entry name" value="TRNA WYBUTOSINE-SYNTHESIZING PROTEIN 4"/>
    <property type="match status" value="1"/>
</dbReference>
<dbReference type="Pfam" id="PF13621">
    <property type="entry name" value="Cupin_8"/>
    <property type="match status" value="1"/>
</dbReference>
<dbReference type="Pfam" id="PF13415">
    <property type="entry name" value="Kelch_3"/>
    <property type="match status" value="1"/>
</dbReference>
<dbReference type="Pfam" id="PF04072">
    <property type="entry name" value="LCM"/>
    <property type="match status" value="1"/>
</dbReference>
<dbReference type="SUPFAM" id="SSF51197">
    <property type="entry name" value="Clavaminate synthase-like"/>
    <property type="match status" value="1"/>
</dbReference>
<dbReference type="SUPFAM" id="SSF117281">
    <property type="entry name" value="Kelch motif"/>
    <property type="match status" value="1"/>
</dbReference>
<dbReference type="SUPFAM" id="SSF53335">
    <property type="entry name" value="S-adenosyl-L-methionine-dependent methyltransferases"/>
    <property type="match status" value="1"/>
</dbReference>
<dbReference type="PROSITE" id="PS51184">
    <property type="entry name" value="JMJC"/>
    <property type="match status" value="1"/>
</dbReference>